<sequence length="37" mass="4038">MTILNNLPSIFVPLVGLVFPAIAMASLSLHVQKNKIF</sequence>
<name>PSAI_POPAL</name>
<comment type="function">
    <text evidence="1">May help in the organization of the PsaL subunit.</text>
</comment>
<comment type="subcellular location">
    <subcellularLocation>
        <location evidence="1">Plastid</location>
        <location evidence="1">Chloroplast thylakoid membrane</location>
        <topology evidence="1">Single-pass membrane protein</topology>
    </subcellularLocation>
</comment>
<comment type="similarity">
    <text evidence="1">Belongs to the PsaI family.</text>
</comment>
<dbReference type="EMBL" id="AP008956">
    <property type="protein sequence ID" value="BAE97215.1"/>
    <property type="molecule type" value="Genomic_DNA"/>
</dbReference>
<dbReference type="RefSeq" id="YP_665568.1">
    <property type="nucleotide sequence ID" value="NC_008235.1"/>
</dbReference>
<dbReference type="SMR" id="Q14FE7"/>
<dbReference type="GeneID" id="4178156"/>
<dbReference type="KEGG" id="palz:4178156"/>
<dbReference type="OrthoDB" id="23178at3646"/>
<dbReference type="GO" id="GO:0009535">
    <property type="term" value="C:chloroplast thylakoid membrane"/>
    <property type="evidence" value="ECO:0007669"/>
    <property type="project" value="UniProtKB-SubCell"/>
</dbReference>
<dbReference type="GO" id="GO:0009522">
    <property type="term" value="C:photosystem I"/>
    <property type="evidence" value="ECO:0007669"/>
    <property type="project" value="UniProtKB-KW"/>
</dbReference>
<dbReference type="GO" id="GO:0015979">
    <property type="term" value="P:photosynthesis"/>
    <property type="evidence" value="ECO:0007669"/>
    <property type="project" value="UniProtKB-UniRule"/>
</dbReference>
<dbReference type="HAMAP" id="MF_00431">
    <property type="entry name" value="PSI_PsaI"/>
    <property type="match status" value="1"/>
</dbReference>
<dbReference type="InterPro" id="IPR001302">
    <property type="entry name" value="PSI_PsaI"/>
</dbReference>
<dbReference type="InterPro" id="IPR036357">
    <property type="entry name" value="PSI_PsaI_sf"/>
</dbReference>
<dbReference type="NCBIfam" id="TIGR03052">
    <property type="entry name" value="PS_I_psaI"/>
    <property type="match status" value="1"/>
</dbReference>
<dbReference type="PANTHER" id="PTHR35775">
    <property type="match status" value="1"/>
</dbReference>
<dbReference type="PANTHER" id="PTHR35775:SF2">
    <property type="entry name" value="PHOTOSYSTEM I REACTION CENTER SUBUNIT VIII"/>
    <property type="match status" value="1"/>
</dbReference>
<dbReference type="Pfam" id="PF00796">
    <property type="entry name" value="PSI_8"/>
    <property type="match status" value="1"/>
</dbReference>
<dbReference type="SUPFAM" id="SSF81540">
    <property type="entry name" value="Subunit VIII of photosystem I reaction centre, PsaI"/>
    <property type="match status" value="1"/>
</dbReference>
<keyword id="KW-0150">Chloroplast</keyword>
<keyword id="KW-0472">Membrane</keyword>
<keyword id="KW-0602">Photosynthesis</keyword>
<keyword id="KW-0603">Photosystem I</keyword>
<keyword id="KW-0934">Plastid</keyword>
<keyword id="KW-0793">Thylakoid</keyword>
<keyword id="KW-0812">Transmembrane</keyword>
<keyword id="KW-1133">Transmembrane helix</keyword>
<organism>
    <name type="scientific">Populus alba</name>
    <name type="common">White poplar</name>
    <dbReference type="NCBI Taxonomy" id="43335"/>
    <lineage>
        <taxon>Eukaryota</taxon>
        <taxon>Viridiplantae</taxon>
        <taxon>Streptophyta</taxon>
        <taxon>Embryophyta</taxon>
        <taxon>Tracheophyta</taxon>
        <taxon>Spermatophyta</taxon>
        <taxon>Magnoliopsida</taxon>
        <taxon>eudicotyledons</taxon>
        <taxon>Gunneridae</taxon>
        <taxon>Pentapetalae</taxon>
        <taxon>rosids</taxon>
        <taxon>fabids</taxon>
        <taxon>Malpighiales</taxon>
        <taxon>Salicaceae</taxon>
        <taxon>Saliceae</taxon>
        <taxon>Populus</taxon>
    </lineage>
</organism>
<accession>Q14FE7</accession>
<evidence type="ECO:0000255" key="1">
    <source>
        <dbReference type="HAMAP-Rule" id="MF_00431"/>
    </source>
</evidence>
<reference key="1">
    <citation type="submission" date="2005-03" db="EMBL/GenBank/DDBJ databases">
        <title>Complete structure of the chloroplast genome of Populus alba.</title>
        <authorList>
            <person name="Okumura S."/>
            <person name="Yamashita A."/>
            <person name="Kanamoto H."/>
            <person name="Hattori M."/>
            <person name="Takase H."/>
            <person name="Tomizawa K."/>
        </authorList>
    </citation>
    <scope>NUCLEOTIDE SEQUENCE [LARGE SCALE GENOMIC DNA]</scope>
</reference>
<geneLocation type="chloroplast"/>
<gene>
    <name evidence="1" type="primary">psaI</name>
</gene>
<feature type="chain" id="PRO_0000276035" description="Photosystem I reaction center subunit VIII">
    <location>
        <begin position="1"/>
        <end position="37"/>
    </location>
</feature>
<feature type="transmembrane region" description="Helical" evidence="1">
    <location>
        <begin position="7"/>
        <end position="27"/>
    </location>
</feature>
<proteinExistence type="inferred from homology"/>
<protein>
    <recommendedName>
        <fullName evidence="1">Photosystem I reaction center subunit VIII</fullName>
        <shortName evidence="1">PSI-I</shortName>
    </recommendedName>
</protein>